<organism>
    <name type="scientific">Pseudomonas aeruginosa (strain ATCC 15692 / DSM 22644 / CIP 104116 / JCM 14847 / LMG 12228 / 1C / PRS 101 / PAO1)</name>
    <dbReference type="NCBI Taxonomy" id="208964"/>
    <lineage>
        <taxon>Bacteria</taxon>
        <taxon>Pseudomonadati</taxon>
        <taxon>Pseudomonadota</taxon>
        <taxon>Gammaproteobacteria</taxon>
        <taxon>Pseudomonadales</taxon>
        <taxon>Pseudomonadaceae</taxon>
        <taxon>Pseudomonas</taxon>
    </lineage>
</organism>
<keyword id="KW-0002">3D-structure</keyword>
<keyword id="KW-0413">Isomerase</keyword>
<keyword id="KW-1185">Reference proteome</keyword>
<comment type="function">
    <text evidence="1">Catalyzes the reversible conversion of ribose-5-phosphate to ribulose 5-phosphate.</text>
</comment>
<comment type="catalytic activity">
    <reaction evidence="1">
        <text>aldehydo-D-ribose 5-phosphate = D-ribulose 5-phosphate</text>
        <dbReference type="Rhea" id="RHEA:14657"/>
        <dbReference type="ChEBI" id="CHEBI:58121"/>
        <dbReference type="ChEBI" id="CHEBI:58273"/>
        <dbReference type="EC" id="5.3.1.6"/>
    </reaction>
</comment>
<comment type="pathway">
    <text evidence="1">Carbohydrate degradation; pentose phosphate pathway; D-ribose 5-phosphate from D-ribulose 5-phosphate (non-oxidative stage): step 1/1.</text>
</comment>
<comment type="subunit">
    <text evidence="1">Homodimer.</text>
</comment>
<comment type="similarity">
    <text evidence="1">Belongs to the ribose 5-phosphate isomerase family.</text>
</comment>
<name>RPIA_PSEAE</name>
<sequence>MNQDQLKQAVAQAAVDHILPHLDSKSIVGVGTGSTANFFIDALARHKAEFDGAVASSEATAKRLKEHGIPVYELNTVSELEFYVDGADESNERLELIKGGGAALTREKIVAAVAKTFICIADASKLVPILGQFPLPVEVIPMARSHVARQLVKLGGDPVYREGVLTDNGNIILDVHNLRIDSPVELEEKINAIVGVVTNGLFAARPADLLLLGTADGVKTLKA</sequence>
<dbReference type="EC" id="5.3.1.6" evidence="1"/>
<dbReference type="EMBL" id="AE004091">
    <property type="protein sequence ID" value="AAG03719.1"/>
    <property type="molecule type" value="Genomic_DNA"/>
</dbReference>
<dbReference type="PIR" id="E83603">
    <property type="entry name" value="E83603"/>
</dbReference>
<dbReference type="RefSeq" id="NP_249021.1">
    <property type="nucleotide sequence ID" value="NC_002516.2"/>
</dbReference>
<dbReference type="RefSeq" id="WP_003084386.1">
    <property type="nucleotide sequence ID" value="NZ_QZGE01000016.1"/>
</dbReference>
<dbReference type="PDB" id="4X84">
    <property type="method" value="X-ray"/>
    <property type="resolution" value="1.25 A"/>
    <property type="chains" value="A/B/C/D=1-223"/>
</dbReference>
<dbReference type="PDBsum" id="4X84"/>
<dbReference type="SMR" id="Q9I6G1"/>
<dbReference type="FunCoup" id="Q9I6G1">
    <property type="interactions" value="553"/>
</dbReference>
<dbReference type="STRING" id="208964.PA0330"/>
<dbReference type="PaxDb" id="208964-PA0330"/>
<dbReference type="DNASU" id="882171"/>
<dbReference type="GeneID" id="882171"/>
<dbReference type="KEGG" id="pae:PA0330"/>
<dbReference type="PATRIC" id="fig|208964.12.peg.346"/>
<dbReference type="PseudoCAP" id="PA0330"/>
<dbReference type="HOGENOM" id="CLU_056590_1_1_6"/>
<dbReference type="InParanoid" id="Q9I6G1"/>
<dbReference type="OrthoDB" id="5870696at2"/>
<dbReference type="PhylomeDB" id="Q9I6G1"/>
<dbReference type="BioCyc" id="PAER208964:G1FZ6-333-MONOMER"/>
<dbReference type="UniPathway" id="UPA00115">
    <property type="reaction ID" value="UER00412"/>
</dbReference>
<dbReference type="EvolutionaryTrace" id="Q9I6G1"/>
<dbReference type="Proteomes" id="UP000002438">
    <property type="component" value="Chromosome"/>
</dbReference>
<dbReference type="GO" id="GO:0005829">
    <property type="term" value="C:cytosol"/>
    <property type="evidence" value="ECO:0000318"/>
    <property type="project" value="GO_Central"/>
</dbReference>
<dbReference type="GO" id="GO:0004751">
    <property type="term" value="F:ribose-5-phosphate isomerase activity"/>
    <property type="evidence" value="ECO:0000318"/>
    <property type="project" value="GO_Central"/>
</dbReference>
<dbReference type="GO" id="GO:0006014">
    <property type="term" value="P:D-ribose metabolic process"/>
    <property type="evidence" value="ECO:0000318"/>
    <property type="project" value="GO_Central"/>
</dbReference>
<dbReference type="GO" id="GO:0009052">
    <property type="term" value="P:pentose-phosphate shunt, non-oxidative branch"/>
    <property type="evidence" value="ECO:0000318"/>
    <property type="project" value="GO_Central"/>
</dbReference>
<dbReference type="CDD" id="cd01398">
    <property type="entry name" value="RPI_A"/>
    <property type="match status" value="1"/>
</dbReference>
<dbReference type="FunFam" id="3.30.70.260:FF:000004">
    <property type="entry name" value="Ribose-5-phosphate isomerase A"/>
    <property type="match status" value="1"/>
</dbReference>
<dbReference type="FunFam" id="3.40.50.1360:FF:000001">
    <property type="entry name" value="Ribose-5-phosphate isomerase A"/>
    <property type="match status" value="1"/>
</dbReference>
<dbReference type="Gene3D" id="3.30.70.260">
    <property type="match status" value="1"/>
</dbReference>
<dbReference type="Gene3D" id="3.40.50.1360">
    <property type="match status" value="1"/>
</dbReference>
<dbReference type="HAMAP" id="MF_00170">
    <property type="entry name" value="Rib_5P_isom_A"/>
    <property type="match status" value="1"/>
</dbReference>
<dbReference type="InterPro" id="IPR037171">
    <property type="entry name" value="NagB/RpiA_transferase-like"/>
</dbReference>
<dbReference type="InterPro" id="IPR020672">
    <property type="entry name" value="Ribose5P_isomerase_typA_subgr"/>
</dbReference>
<dbReference type="InterPro" id="IPR004788">
    <property type="entry name" value="Ribose5P_isomerase_type_A"/>
</dbReference>
<dbReference type="NCBIfam" id="NF001924">
    <property type="entry name" value="PRK00702.1"/>
    <property type="match status" value="1"/>
</dbReference>
<dbReference type="NCBIfam" id="TIGR00021">
    <property type="entry name" value="rpiA"/>
    <property type="match status" value="1"/>
</dbReference>
<dbReference type="PANTHER" id="PTHR11934">
    <property type="entry name" value="RIBOSE-5-PHOSPHATE ISOMERASE"/>
    <property type="match status" value="1"/>
</dbReference>
<dbReference type="PANTHER" id="PTHR11934:SF0">
    <property type="entry name" value="RIBOSE-5-PHOSPHATE ISOMERASE"/>
    <property type="match status" value="1"/>
</dbReference>
<dbReference type="Pfam" id="PF06026">
    <property type="entry name" value="Rib_5-P_isom_A"/>
    <property type="match status" value="1"/>
</dbReference>
<dbReference type="SUPFAM" id="SSF75445">
    <property type="entry name" value="D-ribose-5-phosphate isomerase (RpiA), lid domain"/>
    <property type="match status" value="1"/>
</dbReference>
<dbReference type="SUPFAM" id="SSF100950">
    <property type="entry name" value="NagB/RpiA/CoA transferase-like"/>
    <property type="match status" value="1"/>
</dbReference>
<protein>
    <recommendedName>
        <fullName evidence="1">Ribose-5-phosphate isomerase A</fullName>
        <ecNumber evidence="1">5.3.1.6</ecNumber>
    </recommendedName>
    <alternativeName>
        <fullName evidence="1">Phosphoriboisomerase A</fullName>
        <shortName evidence="1">PRI</shortName>
    </alternativeName>
</protein>
<accession>Q9I6G1</accession>
<reference key="1">
    <citation type="journal article" date="2000" name="Nature">
        <title>Complete genome sequence of Pseudomonas aeruginosa PAO1, an opportunistic pathogen.</title>
        <authorList>
            <person name="Stover C.K."/>
            <person name="Pham X.-Q.T."/>
            <person name="Erwin A.L."/>
            <person name="Mizoguchi S.D."/>
            <person name="Warrener P."/>
            <person name="Hickey M.J."/>
            <person name="Brinkman F.S.L."/>
            <person name="Hufnagle W.O."/>
            <person name="Kowalik D.J."/>
            <person name="Lagrou M."/>
            <person name="Garber R.L."/>
            <person name="Goltry L."/>
            <person name="Tolentino E."/>
            <person name="Westbrock-Wadman S."/>
            <person name="Yuan Y."/>
            <person name="Brody L.L."/>
            <person name="Coulter S.N."/>
            <person name="Folger K.R."/>
            <person name="Kas A."/>
            <person name="Larbig K."/>
            <person name="Lim R.M."/>
            <person name="Smith K.A."/>
            <person name="Spencer D.H."/>
            <person name="Wong G.K.-S."/>
            <person name="Wu Z."/>
            <person name="Paulsen I.T."/>
            <person name="Reizer J."/>
            <person name="Saier M.H. Jr."/>
            <person name="Hancock R.E.W."/>
            <person name="Lory S."/>
            <person name="Olson M.V."/>
        </authorList>
    </citation>
    <scope>NUCLEOTIDE SEQUENCE [LARGE SCALE GENOMIC DNA]</scope>
    <source>
        <strain>ATCC 15692 / DSM 22644 / CIP 104116 / JCM 14847 / LMG 12228 / 1C / PRS 101 / PAO1</strain>
    </source>
</reference>
<gene>
    <name evidence="1" type="primary">rpiA</name>
    <name type="ordered locus">PA0330</name>
</gene>
<proteinExistence type="evidence at protein level"/>
<evidence type="ECO:0000255" key="1">
    <source>
        <dbReference type="HAMAP-Rule" id="MF_00170"/>
    </source>
</evidence>
<evidence type="ECO:0007829" key="2">
    <source>
        <dbReference type="PDB" id="4X84"/>
    </source>
</evidence>
<feature type="chain" id="PRO_0000158450" description="Ribose-5-phosphate isomerase A">
    <location>
        <begin position="1"/>
        <end position="223"/>
    </location>
</feature>
<feature type="active site" description="Proton acceptor" evidence="1">
    <location>
        <position position="107"/>
    </location>
</feature>
<feature type="binding site" evidence="1">
    <location>
        <begin position="32"/>
        <end position="35"/>
    </location>
    <ligand>
        <name>substrate</name>
    </ligand>
</feature>
<feature type="binding site" evidence="1">
    <location>
        <begin position="85"/>
        <end position="88"/>
    </location>
    <ligand>
        <name>substrate</name>
    </ligand>
</feature>
<feature type="binding site" evidence="1">
    <location>
        <begin position="98"/>
        <end position="101"/>
    </location>
    <ligand>
        <name>substrate</name>
    </ligand>
</feature>
<feature type="binding site" evidence="1">
    <location>
        <position position="125"/>
    </location>
    <ligand>
        <name>substrate</name>
    </ligand>
</feature>
<feature type="helix" evidence="2">
    <location>
        <begin position="3"/>
        <end position="18"/>
    </location>
</feature>
<feature type="helix" evidence="2">
    <location>
        <begin position="19"/>
        <end position="21"/>
    </location>
</feature>
<feature type="strand" evidence="2">
    <location>
        <begin position="27"/>
        <end position="30"/>
    </location>
</feature>
<feature type="helix" evidence="2">
    <location>
        <begin position="34"/>
        <end position="44"/>
    </location>
</feature>
<feature type="helix" evidence="2">
    <location>
        <begin position="45"/>
        <end position="49"/>
    </location>
</feature>
<feature type="strand" evidence="2">
    <location>
        <begin position="52"/>
        <end position="57"/>
    </location>
</feature>
<feature type="helix" evidence="2">
    <location>
        <begin position="58"/>
        <end position="66"/>
    </location>
</feature>
<feature type="helix" evidence="2">
    <location>
        <begin position="74"/>
        <end position="76"/>
    </location>
</feature>
<feature type="strand" evidence="2">
    <location>
        <begin position="80"/>
        <end position="85"/>
    </location>
</feature>
<feature type="strand" evidence="2">
    <location>
        <begin position="88"/>
        <end position="90"/>
    </location>
</feature>
<feature type="helix" evidence="2">
    <location>
        <begin position="104"/>
        <end position="113"/>
    </location>
</feature>
<feature type="strand" evidence="2">
    <location>
        <begin position="114"/>
        <end position="122"/>
    </location>
</feature>
<feature type="helix" evidence="2">
    <location>
        <begin position="123"/>
        <end position="125"/>
    </location>
</feature>
<feature type="strand" evidence="2">
    <location>
        <begin position="128"/>
        <end position="130"/>
    </location>
</feature>
<feature type="strand" evidence="2">
    <location>
        <begin position="135"/>
        <end position="139"/>
    </location>
</feature>
<feature type="helix" evidence="2">
    <location>
        <begin position="141"/>
        <end position="143"/>
    </location>
</feature>
<feature type="helix" evidence="2">
    <location>
        <begin position="144"/>
        <end position="153"/>
    </location>
</feature>
<feature type="strand" evidence="2">
    <location>
        <begin position="157"/>
        <end position="160"/>
    </location>
</feature>
<feature type="strand" evidence="2">
    <location>
        <begin position="171"/>
        <end position="177"/>
    </location>
</feature>
<feature type="helix" evidence="2">
    <location>
        <begin position="183"/>
        <end position="191"/>
    </location>
</feature>
<feature type="strand" evidence="2">
    <location>
        <begin position="196"/>
        <end position="202"/>
    </location>
</feature>
<feature type="strand" evidence="2">
    <location>
        <begin position="208"/>
        <end position="214"/>
    </location>
</feature>
<feature type="strand" evidence="2">
    <location>
        <begin position="217"/>
        <end position="221"/>
    </location>
</feature>